<evidence type="ECO:0000255" key="1">
    <source>
        <dbReference type="HAMAP-Rule" id="MF_01419"/>
    </source>
</evidence>
<organism>
    <name type="scientific">Sulfolobus acidocaldarius (strain ATCC 33909 / DSM 639 / JCM 8929 / NBRC 15157 / NCIMB 11770)</name>
    <dbReference type="NCBI Taxonomy" id="330779"/>
    <lineage>
        <taxon>Archaea</taxon>
        <taxon>Thermoproteota</taxon>
        <taxon>Thermoprotei</taxon>
        <taxon>Sulfolobales</taxon>
        <taxon>Sulfolobaceae</taxon>
        <taxon>Sulfolobus</taxon>
    </lineage>
</organism>
<proteinExistence type="inferred from homology"/>
<gene>
    <name type="ordered locus">Saci_1518</name>
</gene>
<reference key="1">
    <citation type="journal article" date="2005" name="J. Bacteriol.">
        <title>The genome of Sulfolobus acidocaldarius, a model organism of the Crenarchaeota.</title>
        <authorList>
            <person name="Chen L."/>
            <person name="Bruegger K."/>
            <person name="Skovgaard M."/>
            <person name="Redder P."/>
            <person name="She Q."/>
            <person name="Torarinsson E."/>
            <person name="Greve B."/>
            <person name="Awayez M."/>
            <person name="Zibat A."/>
            <person name="Klenk H.-P."/>
            <person name="Garrett R.A."/>
        </authorList>
    </citation>
    <scope>NUCLEOTIDE SEQUENCE [LARGE SCALE GENOMIC DNA]</scope>
    <source>
        <strain>ATCC 33909 / DSM 639 / JCM 8929 / NBRC 15157 / NCIMB 11770</strain>
    </source>
</reference>
<keyword id="KW-0119">Carbohydrate metabolism</keyword>
<keyword id="KW-0378">Hydrolase</keyword>
<keyword id="KW-0460">Magnesium</keyword>
<keyword id="KW-0479">Metal-binding</keyword>
<keyword id="KW-1185">Reference proteome</keyword>
<comment type="function">
    <text evidence="1">Catalyzes the dephosphorylation of 2-phosphoglycolate.</text>
</comment>
<comment type="catalytic activity">
    <reaction evidence="1">
        <text>2-phosphoglycolate + H2O = glycolate + phosphate</text>
        <dbReference type="Rhea" id="RHEA:14369"/>
        <dbReference type="ChEBI" id="CHEBI:15377"/>
        <dbReference type="ChEBI" id="CHEBI:29805"/>
        <dbReference type="ChEBI" id="CHEBI:43474"/>
        <dbReference type="ChEBI" id="CHEBI:58033"/>
        <dbReference type="EC" id="3.1.3.18"/>
    </reaction>
</comment>
<comment type="cofactor">
    <cofactor evidence="1">
        <name>Mg(2+)</name>
        <dbReference type="ChEBI" id="CHEBI:18420"/>
    </cofactor>
</comment>
<comment type="similarity">
    <text evidence="1">Belongs to the archaeal SPP-like hydrolase family.</text>
</comment>
<feature type="chain" id="PRO_0000146727" description="Phosphoglycolate phosphatase">
    <location>
        <begin position="1"/>
        <end position="227"/>
    </location>
</feature>
<feature type="active site" description="Nucleophile" evidence="1">
    <location>
        <position position="8"/>
    </location>
</feature>
<feature type="binding site" evidence="1">
    <location>
        <position position="8"/>
    </location>
    <ligand>
        <name>Mg(2+)</name>
        <dbReference type="ChEBI" id="CHEBI:18420"/>
    </ligand>
</feature>
<feature type="binding site" evidence="1">
    <location>
        <position position="10"/>
    </location>
    <ligand>
        <name>Mg(2+)</name>
        <dbReference type="ChEBI" id="CHEBI:18420"/>
    </ligand>
</feature>
<feature type="binding site" evidence="1">
    <location>
        <position position="150"/>
    </location>
    <ligand>
        <name>substrate</name>
    </ligand>
</feature>
<feature type="binding site" evidence="1">
    <location>
        <position position="173"/>
    </location>
    <ligand>
        <name>Mg(2+)</name>
        <dbReference type="ChEBI" id="CHEBI:18420"/>
    </ligand>
</feature>
<feature type="binding site" evidence="1">
    <location>
        <position position="177"/>
    </location>
    <ligand>
        <name>Mg(2+)</name>
        <dbReference type="ChEBI" id="CHEBI:18420"/>
    </ligand>
</feature>
<sequence length="227" mass="25468">MIRLILTDVDGTLTFDRDTYNIDLDAVDLLRKVEKKGIKVGLVSGNSYPVLRALYTYFGFNGGIVAENGCIVYYDNQLKEVCERVERSLISEFENRFGVKGSWQNQFKVCDFSFYPPILKDEMVKWALDKGLYIKTSGYAVHISKSKRGKAEGVRELIKMHGLDKAEVVGIGDSSTDIEFLEEVGIRVVVGNADESLKSIGDFVMREKSGKAVVEFIKKVITGEINE</sequence>
<protein>
    <recommendedName>
        <fullName evidence="1">Phosphoglycolate phosphatase</fullName>
        <shortName evidence="1">PGP</shortName>
        <shortName evidence="1">PGPase</shortName>
        <ecNumber evidence="1">3.1.3.18</ecNumber>
    </recommendedName>
</protein>
<accession>Q4J8P4</accession>
<name>PGP_SULAC</name>
<dbReference type="EC" id="3.1.3.18" evidence="1"/>
<dbReference type="EMBL" id="CP000077">
    <property type="protein sequence ID" value="AAY80837.1"/>
    <property type="molecule type" value="Genomic_DNA"/>
</dbReference>
<dbReference type="RefSeq" id="WP_011278339.1">
    <property type="nucleotide sequence ID" value="NC_007181.1"/>
</dbReference>
<dbReference type="SMR" id="Q4J8P4"/>
<dbReference type="STRING" id="330779.Saci_1518"/>
<dbReference type="DNASU" id="3474642"/>
<dbReference type="GeneID" id="14552016"/>
<dbReference type="KEGG" id="sai:Saci_1518"/>
<dbReference type="PATRIC" id="fig|330779.12.peg.1462"/>
<dbReference type="eggNOG" id="arCOG01213">
    <property type="taxonomic scope" value="Archaea"/>
</dbReference>
<dbReference type="HOGENOM" id="CLU_044146_2_0_2"/>
<dbReference type="Proteomes" id="UP000001018">
    <property type="component" value="Chromosome"/>
</dbReference>
<dbReference type="GO" id="GO:0005829">
    <property type="term" value="C:cytosol"/>
    <property type="evidence" value="ECO:0007669"/>
    <property type="project" value="TreeGrafter"/>
</dbReference>
<dbReference type="GO" id="GO:0000287">
    <property type="term" value="F:magnesium ion binding"/>
    <property type="evidence" value="ECO:0007669"/>
    <property type="project" value="InterPro"/>
</dbReference>
<dbReference type="GO" id="GO:0008967">
    <property type="term" value="F:phosphoglycolate phosphatase activity"/>
    <property type="evidence" value="ECO:0007669"/>
    <property type="project" value="UniProtKB-UniRule"/>
</dbReference>
<dbReference type="CDD" id="cd07514">
    <property type="entry name" value="HAD_Pase"/>
    <property type="match status" value="1"/>
</dbReference>
<dbReference type="Gene3D" id="3.90.1070.10">
    <property type="match status" value="1"/>
</dbReference>
<dbReference type="Gene3D" id="3.40.50.1000">
    <property type="entry name" value="HAD superfamily/HAD-like"/>
    <property type="match status" value="1"/>
</dbReference>
<dbReference type="HAMAP" id="MF_01419">
    <property type="entry name" value="GPH_hydrolase_arch"/>
    <property type="match status" value="1"/>
</dbReference>
<dbReference type="InterPro" id="IPR036412">
    <property type="entry name" value="HAD-like_sf"/>
</dbReference>
<dbReference type="InterPro" id="IPR006379">
    <property type="entry name" value="HAD-SF_hydro_IIB"/>
</dbReference>
<dbReference type="InterPro" id="IPR023214">
    <property type="entry name" value="HAD_sf"/>
</dbReference>
<dbReference type="InterPro" id="IPR006382">
    <property type="entry name" value="PGPase"/>
</dbReference>
<dbReference type="NCBIfam" id="TIGR01484">
    <property type="entry name" value="HAD-SF-IIB"/>
    <property type="match status" value="1"/>
</dbReference>
<dbReference type="NCBIfam" id="TIGR01487">
    <property type="entry name" value="Pglycolate_arch"/>
    <property type="match status" value="1"/>
</dbReference>
<dbReference type="PANTHER" id="PTHR10000:SF8">
    <property type="entry name" value="HAD SUPERFAMILY HYDROLASE-LIKE, TYPE 3"/>
    <property type="match status" value="1"/>
</dbReference>
<dbReference type="PANTHER" id="PTHR10000">
    <property type="entry name" value="PHOSPHOSERINE PHOSPHATASE"/>
    <property type="match status" value="1"/>
</dbReference>
<dbReference type="Pfam" id="PF08282">
    <property type="entry name" value="Hydrolase_3"/>
    <property type="match status" value="2"/>
</dbReference>
<dbReference type="SFLD" id="SFLDS00003">
    <property type="entry name" value="Haloacid_Dehalogenase"/>
    <property type="match status" value="1"/>
</dbReference>
<dbReference type="SFLD" id="SFLDF00446">
    <property type="entry name" value="phosphoglycolate_phosphatase_3"/>
    <property type="match status" value="1"/>
</dbReference>
<dbReference type="SUPFAM" id="SSF56784">
    <property type="entry name" value="HAD-like"/>
    <property type="match status" value="1"/>
</dbReference>